<keyword id="KW-0963">Cytoplasm</keyword>
<keyword id="KW-0251">Elongation factor</keyword>
<keyword id="KW-0648">Protein biosynthesis</keyword>
<keyword id="KW-1185">Reference proteome</keyword>
<comment type="function">
    <text evidence="1">Associates with the EF-Tu.GDP complex and induces the exchange of GDP to GTP. It remains bound to the aminoacyl-tRNA.EF-Tu.GTP complex up to the GTP hydrolysis stage on the ribosome.</text>
</comment>
<comment type="subcellular location">
    <subcellularLocation>
        <location evidence="1">Cytoplasm</location>
    </subcellularLocation>
</comment>
<comment type="similarity">
    <text evidence="1">Belongs to the EF-Ts family.</text>
</comment>
<evidence type="ECO:0000255" key="1">
    <source>
        <dbReference type="HAMAP-Rule" id="MF_00050"/>
    </source>
</evidence>
<accession>Q2J710</accession>
<feature type="chain" id="PRO_0000241484" description="Elongation factor Ts">
    <location>
        <begin position="1"/>
        <end position="204"/>
    </location>
</feature>
<feature type="region of interest" description="Involved in Mg(2+) ion dislocation from EF-Tu" evidence="1">
    <location>
        <begin position="87"/>
        <end position="90"/>
    </location>
</feature>
<dbReference type="EMBL" id="CP000249">
    <property type="protein sequence ID" value="ABD12932.1"/>
    <property type="molecule type" value="Genomic_DNA"/>
</dbReference>
<dbReference type="RefSeq" id="WP_011437956.1">
    <property type="nucleotide sequence ID" value="NZ_LRTJ01000033.1"/>
</dbReference>
<dbReference type="SMR" id="Q2J710"/>
<dbReference type="STRING" id="106370.Francci3_3580"/>
<dbReference type="KEGG" id="fra:Francci3_3580"/>
<dbReference type="eggNOG" id="COG0264">
    <property type="taxonomic scope" value="Bacteria"/>
</dbReference>
<dbReference type="HOGENOM" id="CLU_047155_1_1_11"/>
<dbReference type="OrthoDB" id="9808348at2"/>
<dbReference type="PhylomeDB" id="Q2J710"/>
<dbReference type="Proteomes" id="UP000001937">
    <property type="component" value="Chromosome"/>
</dbReference>
<dbReference type="GO" id="GO:0005737">
    <property type="term" value="C:cytoplasm"/>
    <property type="evidence" value="ECO:0007669"/>
    <property type="project" value="UniProtKB-SubCell"/>
</dbReference>
<dbReference type="GO" id="GO:0003746">
    <property type="term" value="F:translation elongation factor activity"/>
    <property type="evidence" value="ECO:0007669"/>
    <property type="project" value="UniProtKB-UniRule"/>
</dbReference>
<dbReference type="CDD" id="cd14275">
    <property type="entry name" value="UBA_EF-Ts"/>
    <property type="match status" value="1"/>
</dbReference>
<dbReference type="FunFam" id="1.10.286.20:FF:000001">
    <property type="entry name" value="Elongation factor Ts"/>
    <property type="match status" value="1"/>
</dbReference>
<dbReference type="FunFam" id="1.10.8.10:FF:000001">
    <property type="entry name" value="Elongation factor Ts"/>
    <property type="match status" value="1"/>
</dbReference>
<dbReference type="Gene3D" id="1.10.286.20">
    <property type="match status" value="1"/>
</dbReference>
<dbReference type="Gene3D" id="1.10.8.10">
    <property type="entry name" value="DNA helicase RuvA subunit, C-terminal domain"/>
    <property type="match status" value="1"/>
</dbReference>
<dbReference type="Gene3D" id="3.30.479.20">
    <property type="entry name" value="Elongation factor Ts, dimerisation domain"/>
    <property type="match status" value="1"/>
</dbReference>
<dbReference type="HAMAP" id="MF_00050">
    <property type="entry name" value="EF_Ts"/>
    <property type="match status" value="1"/>
</dbReference>
<dbReference type="InterPro" id="IPR036402">
    <property type="entry name" value="EF-Ts_dimer_sf"/>
</dbReference>
<dbReference type="InterPro" id="IPR001816">
    <property type="entry name" value="Transl_elong_EFTs/EF1B"/>
</dbReference>
<dbReference type="InterPro" id="IPR014039">
    <property type="entry name" value="Transl_elong_EFTs/EF1B_dimer"/>
</dbReference>
<dbReference type="InterPro" id="IPR018101">
    <property type="entry name" value="Transl_elong_Ts_CS"/>
</dbReference>
<dbReference type="InterPro" id="IPR009060">
    <property type="entry name" value="UBA-like_sf"/>
</dbReference>
<dbReference type="NCBIfam" id="TIGR00116">
    <property type="entry name" value="tsf"/>
    <property type="match status" value="1"/>
</dbReference>
<dbReference type="PANTHER" id="PTHR11741">
    <property type="entry name" value="ELONGATION FACTOR TS"/>
    <property type="match status" value="1"/>
</dbReference>
<dbReference type="PANTHER" id="PTHR11741:SF0">
    <property type="entry name" value="ELONGATION FACTOR TS, MITOCHONDRIAL"/>
    <property type="match status" value="1"/>
</dbReference>
<dbReference type="Pfam" id="PF00889">
    <property type="entry name" value="EF_TS"/>
    <property type="match status" value="2"/>
</dbReference>
<dbReference type="SUPFAM" id="SSF54713">
    <property type="entry name" value="Elongation factor Ts (EF-Ts), dimerisation domain"/>
    <property type="match status" value="1"/>
</dbReference>
<dbReference type="SUPFAM" id="SSF46934">
    <property type="entry name" value="UBA-like"/>
    <property type="match status" value="1"/>
</dbReference>
<dbReference type="PROSITE" id="PS01126">
    <property type="entry name" value="EF_TS_1"/>
    <property type="match status" value="1"/>
</dbReference>
<name>EFTS_FRACC</name>
<organism>
    <name type="scientific">Frankia casuarinae (strain DSM 45818 / CECT 9043 / HFP020203 / CcI3)</name>
    <dbReference type="NCBI Taxonomy" id="106370"/>
    <lineage>
        <taxon>Bacteria</taxon>
        <taxon>Bacillati</taxon>
        <taxon>Actinomycetota</taxon>
        <taxon>Actinomycetes</taxon>
        <taxon>Frankiales</taxon>
        <taxon>Frankiaceae</taxon>
        <taxon>Frankia</taxon>
    </lineage>
</organism>
<gene>
    <name evidence="1" type="primary">tsf</name>
    <name type="ordered locus">Francci3_3580</name>
</gene>
<sequence length="204" mass="22440">MAEISVADIRKLRELTGAGMSDVKKALVDNAGDFEKAKSWLREKGKAQVAKRAARSAANGLVESYLHRTDPQLPPTLGVLVELRCETDFVAKTEDFKQLARDLAQHIAAADPLYVTAEQIPNEVLEAERKIYEAAAREEGKPEQAIAKIVEGRVNGYVKSSVLLDQPWVKDGKVTIRALLDQAGASLGEKIEVGRFSRFNIRQA</sequence>
<protein>
    <recommendedName>
        <fullName evidence="1">Elongation factor Ts</fullName>
        <shortName evidence="1">EF-Ts</shortName>
    </recommendedName>
</protein>
<reference key="1">
    <citation type="journal article" date="2007" name="Genome Res.">
        <title>Genome characteristics of facultatively symbiotic Frankia sp. strains reflect host range and host plant biogeography.</title>
        <authorList>
            <person name="Normand P."/>
            <person name="Lapierre P."/>
            <person name="Tisa L.S."/>
            <person name="Gogarten J.P."/>
            <person name="Alloisio N."/>
            <person name="Bagnarol E."/>
            <person name="Bassi C.A."/>
            <person name="Berry A.M."/>
            <person name="Bickhart D.M."/>
            <person name="Choisne N."/>
            <person name="Couloux A."/>
            <person name="Cournoyer B."/>
            <person name="Cruveiller S."/>
            <person name="Daubin V."/>
            <person name="Demange N."/>
            <person name="Francino M.P."/>
            <person name="Goltsman E."/>
            <person name="Huang Y."/>
            <person name="Kopp O.R."/>
            <person name="Labarre L."/>
            <person name="Lapidus A."/>
            <person name="Lavire C."/>
            <person name="Marechal J."/>
            <person name="Martinez M."/>
            <person name="Mastronunzio J.E."/>
            <person name="Mullin B.C."/>
            <person name="Niemann J."/>
            <person name="Pujic P."/>
            <person name="Rawnsley T."/>
            <person name="Rouy Z."/>
            <person name="Schenowitz C."/>
            <person name="Sellstedt A."/>
            <person name="Tavares F."/>
            <person name="Tomkins J.P."/>
            <person name="Vallenet D."/>
            <person name="Valverde C."/>
            <person name="Wall L.G."/>
            <person name="Wang Y."/>
            <person name="Medigue C."/>
            <person name="Benson D.R."/>
        </authorList>
    </citation>
    <scope>NUCLEOTIDE SEQUENCE [LARGE SCALE GENOMIC DNA]</scope>
    <source>
        <strain>DSM 45818 / CECT 9043 / HFP020203 / CcI3</strain>
    </source>
</reference>
<proteinExistence type="inferred from homology"/>